<reference key="1">
    <citation type="journal article" date="2004" name="Nucleic Acids Res.">
        <title>Unique features revealed by the genome sequence of Acinetobacter sp. ADP1, a versatile and naturally transformation competent bacterium.</title>
        <authorList>
            <person name="Barbe V."/>
            <person name="Vallenet D."/>
            <person name="Fonknechten N."/>
            <person name="Kreimeyer A."/>
            <person name="Oztas S."/>
            <person name="Labarre L."/>
            <person name="Cruveiller S."/>
            <person name="Robert C."/>
            <person name="Duprat S."/>
            <person name="Wincker P."/>
            <person name="Ornston L.N."/>
            <person name="Weissenbach J."/>
            <person name="Marliere P."/>
            <person name="Cohen G.N."/>
            <person name="Medigue C."/>
        </authorList>
    </citation>
    <scope>NUCLEOTIDE SEQUENCE [LARGE SCALE GENOMIC DNA]</scope>
    <source>
        <strain>ATCC 33305 / BD413 / ADP1</strain>
    </source>
</reference>
<keyword id="KW-0067">ATP-binding</keyword>
<keyword id="KW-0963">Cytoplasm</keyword>
<keyword id="KW-0418">Kinase</keyword>
<keyword id="KW-0520">NAD</keyword>
<keyword id="KW-0521">NADP</keyword>
<keyword id="KW-0547">Nucleotide-binding</keyword>
<keyword id="KW-0808">Transferase</keyword>
<feature type="chain" id="PRO_0000229595" description="NAD kinase">
    <location>
        <begin position="1"/>
        <end position="307"/>
    </location>
</feature>
<feature type="active site" description="Proton acceptor" evidence="1">
    <location>
        <position position="80"/>
    </location>
</feature>
<feature type="binding site" evidence="1">
    <location>
        <begin position="80"/>
        <end position="81"/>
    </location>
    <ligand>
        <name>NAD(+)</name>
        <dbReference type="ChEBI" id="CHEBI:57540"/>
    </ligand>
</feature>
<feature type="binding site" evidence="1">
    <location>
        <position position="85"/>
    </location>
    <ligand>
        <name>NAD(+)</name>
        <dbReference type="ChEBI" id="CHEBI:57540"/>
    </ligand>
</feature>
<feature type="binding site" evidence="1">
    <location>
        <begin position="154"/>
        <end position="155"/>
    </location>
    <ligand>
        <name>NAD(+)</name>
        <dbReference type="ChEBI" id="CHEBI:57540"/>
    </ligand>
</feature>
<feature type="binding site" evidence="1">
    <location>
        <position position="165"/>
    </location>
    <ligand>
        <name>NAD(+)</name>
        <dbReference type="ChEBI" id="CHEBI:57540"/>
    </ligand>
</feature>
<feature type="binding site" evidence="1">
    <location>
        <position position="182"/>
    </location>
    <ligand>
        <name>NAD(+)</name>
        <dbReference type="ChEBI" id="CHEBI:57540"/>
    </ligand>
</feature>
<feature type="binding site" evidence="1">
    <location>
        <position position="184"/>
    </location>
    <ligand>
        <name>NAD(+)</name>
        <dbReference type="ChEBI" id="CHEBI:57540"/>
    </ligand>
</feature>
<feature type="binding site" evidence="1">
    <location>
        <begin position="195"/>
        <end position="200"/>
    </location>
    <ligand>
        <name>NAD(+)</name>
        <dbReference type="ChEBI" id="CHEBI:57540"/>
    </ligand>
</feature>
<feature type="binding site" evidence="1">
    <location>
        <position position="254"/>
    </location>
    <ligand>
        <name>NAD(+)</name>
        <dbReference type="ChEBI" id="CHEBI:57540"/>
    </ligand>
</feature>
<dbReference type="EC" id="2.7.1.23" evidence="1"/>
<dbReference type="EMBL" id="CR543861">
    <property type="protein sequence ID" value="CAG69026.1"/>
    <property type="molecule type" value="Genomic_DNA"/>
</dbReference>
<dbReference type="RefSeq" id="WP_004927840.1">
    <property type="nucleotide sequence ID" value="NC_005966.1"/>
</dbReference>
<dbReference type="SMR" id="Q6FA87"/>
<dbReference type="STRING" id="202950.GCA_001485005_00163"/>
<dbReference type="GeneID" id="45234562"/>
<dbReference type="KEGG" id="aci:ACIAD2231"/>
<dbReference type="eggNOG" id="COG0061">
    <property type="taxonomic scope" value="Bacteria"/>
</dbReference>
<dbReference type="HOGENOM" id="CLU_008831_0_1_6"/>
<dbReference type="OrthoDB" id="9774737at2"/>
<dbReference type="BioCyc" id="ASP62977:ACIAD_RS10220-MONOMER"/>
<dbReference type="Proteomes" id="UP000000430">
    <property type="component" value="Chromosome"/>
</dbReference>
<dbReference type="GO" id="GO:0005737">
    <property type="term" value="C:cytoplasm"/>
    <property type="evidence" value="ECO:0007669"/>
    <property type="project" value="UniProtKB-SubCell"/>
</dbReference>
<dbReference type="GO" id="GO:0005524">
    <property type="term" value="F:ATP binding"/>
    <property type="evidence" value="ECO:0007669"/>
    <property type="project" value="UniProtKB-KW"/>
</dbReference>
<dbReference type="GO" id="GO:0046872">
    <property type="term" value="F:metal ion binding"/>
    <property type="evidence" value="ECO:0007669"/>
    <property type="project" value="UniProtKB-UniRule"/>
</dbReference>
<dbReference type="GO" id="GO:0051287">
    <property type="term" value="F:NAD binding"/>
    <property type="evidence" value="ECO:0007669"/>
    <property type="project" value="UniProtKB-ARBA"/>
</dbReference>
<dbReference type="GO" id="GO:0003951">
    <property type="term" value="F:NAD+ kinase activity"/>
    <property type="evidence" value="ECO:0007669"/>
    <property type="project" value="UniProtKB-UniRule"/>
</dbReference>
<dbReference type="GO" id="GO:0019674">
    <property type="term" value="P:NAD metabolic process"/>
    <property type="evidence" value="ECO:0007669"/>
    <property type="project" value="InterPro"/>
</dbReference>
<dbReference type="GO" id="GO:0006741">
    <property type="term" value="P:NADP biosynthetic process"/>
    <property type="evidence" value="ECO:0007669"/>
    <property type="project" value="UniProtKB-UniRule"/>
</dbReference>
<dbReference type="FunFam" id="2.60.200.30:FF:000009">
    <property type="entry name" value="Poly(P)/ATP NAD kinase"/>
    <property type="match status" value="1"/>
</dbReference>
<dbReference type="Gene3D" id="3.40.50.10330">
    <property type="entry name" value="Probable inorganic polyphosphate/atp-NAD kinase, domain 1"/>
    <property type="match status" value="1"/>
</dbReference>
<dbReference type="Gene3D" id="2.60.200.30">
    <property type="entry name" value="Probable inorganic polyphosphate/atp-NAD kinase, domain 2"/>
    <property type="match status" value="1"/>
</dbReference>
<dbReference type="HAMAP" id="MF_00361">
    <property type="entry name" value="NAD_kinase"/>
    <property type="match status" value="1"/>
</dbReference>
<dbReference type="InterPro" id="IPR017438">
    <property type="entry name" value="ATP-NAD_kinase_N"/>
</dbReference>
<dbReference type="InterPro" id="IPR017437">
    <property type="entry name" value="ATP-NAD_kinase_PpnK-typ_C"/>
</dbReference>
<dbReference type="InterPro" id="IPR016064">
    <property type="entry name" value="NAD/diacylglycerol_kinase_sf"/>
</dbReference>
<dbReference type="InterPro" id="IPR002504">
    <property type="entry name" value="NADK"/>
</dbReference>
<dbReference type="NCBIfam" id="NF002306">
    <property type="entry name" value="PRK01231.1"/>
    <property type="match status" value="1"/>
</dbReference>
<dbReference type="PANTHER" id="PTHR20275">
    <property type="entry name" value="NAD KINASE"/>
    <property type="match status" value="1"/>
</dbReference>
<dbReference type="PANTHER" id="PTHR20275:SF0">
    <property type="entry name" value="NAD KINASE"/>
    <property type="match status" value="1"/>
</dbReference>
<dbReference type="Pfam" id="PF01513">
    <property type="entry name" value="NAD_kinase"/>
    <property type="match status" value="1"/>
</dbReference>
<dbReference type="Pfam" id="PF20143">
    <property type="entry name" value="NAD_kinase_C"/>
    <property type="match status" value="1"/>
</dbReference>
<dbReference type="SUPFAM" id="SSF111331">
    <property type="entry name" value="NAD kinase/diacylglycerol kinase-like"/>
    <property type="match status" value="1"/>
</dbReference>
<evidence type="ECO:0000255" key="1">
    <source>
        <dbReference type="HAMAP-Rule" id="MF_00361"/>
    </source>
</evidence>
<name>NADK_ACIAD</name>
<proteinExistence type="inferred from homology"/>
<gene>
    <name evidence="1" type="primary">nadK</name>
    <name type="ordered locus">ACIAD2231</name>
</gene>
<comment type="function">
    <text evidence="1">Involved in the regulation of the intracellular balance of NAD and NADP, and is a key enzyme in the biosynthesis of NADP. Catalyzes specifically the phosphorylation on 2'-hydroxyl of the adenosine moiety of NAD to yield NADP.</text>
</comment>
<comment type="catalytic activity">
    <reaction evidence="1">
        <text>NAD(+) + ATP = ADP + NADP(+) + H(+)</text>
        <dbReference type="Rhea" id="RHEA:18629"/>
        <dbReference type="ChEBI" id="CHEBI:15378"/>
        <dbReference type="ChEBI" id="CHEBI:30616"/>
        <dbReference type="ChEBI" id="CHEBI:57540"/>
        <dbReference type="ChEBI" id="CHEBI:58349"/>
        <dbReference type="ChEBI" id="CHEBI:456216"/>
        <dbReference type="EC" id="2.7.1.23"/>
    </reaction>
</comment>
<comment type="cofactor">
    <cofactor evidence="1">
        <name>a divalent metal cation</name>
        <dbReference type="ChEBI" id="CHEBI:60240"/>
    </cofactor>
</comment>
<comment type="subcellular location">
    <subcellularLocation>
        <location evidence="1">Cytoplasm</location>
    </subcellularLocation>
</comment>
<comment type="similarity">
    <text evidence="1">Belongs to the NAD kinase family.</text>
</comment>
<accession>Q6FA87</accession>
<protein>
    <recommendedName>
        <fullName evidence="1">NAD kinase</fullName>
        <ecNumber evidence="1">2.7.1.23</ecNumber>
    </recommendedName>
    <alternativeName>
        <fullName evidence="1">ATP-dependent NAD kinase</fullName>
    </alternativeName>
</protein>
<sequence length="307" mass="33823">MQSANLSSAKSFRNIGLIGRPDKISVVETLCLIHDHLRGLGLHVIFDQETAELVPYTNVQTASRSLLGEVVDLVIVVGGDGSLLHAARALVRHHTPVIGINRGRLGFLTDIKPADALFKLDQVLKGHFQLDRRFLLEMEVRTKGETLYDAIALNDVVLHSGKSVHMIDFELQIDGQYVYRQHSDGLIVSTPTGSTAYALSGGGPILHPSMDAIALVPMHPHTLSSRPIVVGGQSEIKLTIRENRVLPMVSADGQHSVSLNVGDCVHIRKHPFKLNLLHPPGYDFYMACRTKLGWNQDFDLIKEQDDS</sequence>
<organism>
    <name type="scientific">Acinetobacter baylyi (strain ATCC 33305 / BD413 / ADP1)</name>
    <dbReference type="NCBI Taxonomy" id="62977"/>
    <lineage>
        <taxon>Bacteria</taxon>
        <taxon>Pseudomonadati</taxon>
        <taxon>Pseudomonadota</taxon>
        <taxon>Gammaproteobacteria</taxon>
        <taxon>Moraxellales</taxon>
        <taxon>Moraxellaceae</taxon>
        <taxon>Acinetobacter</taxon>
    </lineage>
</organism>